<organism>
    <name type="scientific">Rhizobium sp</name>
    <dbReference type="NCBI Taxonomy" id="391"/>
    <lineage>
        <taxon>Bacteria</taxon>
        <taxon>Pseudomonadati</taxon>
        <taxon>Pseudomonadota</taxon>
        <taxon>Alphaproteobacteria</taxon>
        <taxon>Hyphomicrobiales</taxon>
        <taxon>Rhizobiaceae</taxon>
        <taxon>Rhizobium/Agrobacterium group</taxon>
        <taxon>Rhizobium</taxon>
    </lineage>
</organism>
<keyword id="KW-0963">Cytoplasm</keyword>
<keyword id="KW-0903">Direct protein sequencing</keyword>
<keyword id="KW-0378">Hydrolase</keyword>
<keyword id="KW-0511">Multifunctional enzyme</keyword>
<keyword id="KW-0520">NAD</keyword>
<keyword id="KW-0560">Oxidoreductase</keyword>
<protein>
    <recommendedName>
        <fullName evidence="1">L-carnitine dehydrogenase/betainyl-CoA thioesterase</fullName>
    </recommendedName>
    <alternativeName>
        <fullName evidence="1">CDH thioesterase</fullName>
    </alternativeName>
    <domain>
        <recommendedName>
            <fullName evidence="4">L-carnitine dehydrogenase</fullName>
            <shortName evidence="4">CDH</shortName>
            <shortName evidence="5">L-CDH</shortName>
            <ecNumber evidence="3">1.1.1.108</ecNumber>
        </recommendedName>
    </domain>
    <domain>
        <recommendedName>
            <fullName evidence="1">Betainyl-CoA thioesterase</fullName>
            <ecNumber evidence="1">3.1.2.33</ecNumber>
        </recommendedName>
        <alternativeName>
            <fullName evidence="1">Betainyl-CoA thiolase</fullName>
        </alternativeName>
    </domain>
</protein>
<sequence length="497" mass="54474">MSFITKAACVGGGVIGGAWVARFALAGIDVKIFDPHPEAERIIGEVMANAERAYAMLTMAPLPPKGKLTFCKSIEEAVEGADWIQESVPERLELKRGVITKIDAAARPDALIGSSTSGLLPSDLQSEMHHPERMFVAHPYNPVYLLPLVELVGGKKTSKATIERAMQGVEQIGMKGVVIAKEIEAFVGDRLLEALWREALWLIQDDICHTETLDNVMRYSFGMRWAQMGLFETYRIAGGEAGMRHFLAQFGPCLKWPWTKFTDVVDLDDALVEKIGAQSDAQAAGRSIRELERIRDENLVGIMHALKSGNGGEGWGAGKLLADFEAKLWANARKPEADLGDVKPLRILDTKVSAAWVDYNGHMTEHRYLQVFGDTSDGVLRLIGVDLDYVRDGHSYYTVETHIRNLGDEASGEALYSTCQILSSDEKRLHIFSTIYNAATNEAVATAEQMMLHVDSKAGKAVAAPEAVLSKLRAITEAHAQLQTPDGAGRFVGQKRA</sequence>
<evidence type="ECO:0000250" key="1">
    <source>
        <dbReference type="UniProtKB" id="Q92NF5"/>
    </source>
</evidence>
<evidence type="ECO:0000255" key="2"/>
<evidence type="ECO:0000269" key="3">
    <source>
    </source>
</evidence>
<evidence type="ECO:0000303" key="4">
    <source>
    </source>
</evidence>
<evidence type="ECO:0000305" key="5"/>
<evidence type="ECO:0000305" key="6">
    <source>
    </source>
</evidence>
<evidence type="ECO:0000312" key="7">
    <source>
        <dbReference type="EMBL" id="BAJ10559.1"/>
    </source>
</evidence>
<name>LCDHT_RHISP</name>
<feature type="chain" id="PRO_0000417906" description="L-carnitine dehydrogenase/betainyl-CoA thioesterase">
    <location>
        <begin position="1"/>
        <end position="497"/>
    </location>
</feature>
<feature type="region of interest" description="L-carnitine dehydrogenase" evidence="5">
    <location>
        <begin position="1"/>
        <end position="335"/>
    </location>
</feature>
<feature type="region of interest" description="Important for dehydrogenase activity" evidence="6">
    <location>
        <begin position="330"/>
        <end position="335"/>
    </location>
</feature>
<feature type="region of interest" description="Betainyl-CoA thioesterase" evidence="1">
    <location>
        <begin position="336"/>
        <end position="497"/>
    </location>
</feature>
<feature type="binding site" evidence="2">
    <location>
        <begin position="11"/>
        <end position="16"/>
    </location>
    <ligand>
        <name>NAD(+)</name>
        <dbReference type="ChEBI" id="CHEBI:57540"/>
    </ligand>
</feature>
<proteinExistence type="evidence at protein level"/>
<dbReference type="EC" id="1.1.1.108" evidence="3"/>
<dbReference type="EC" id="3.1.2.33" evidence="1"/>
<dbReference type="EMBL" id="AB079692">
    <property type="protein sequence ID" value="BAJ10559.1"/>
    <property type="molecule type" value="Genomic_DNA"/>
</dbReference>
<dbReference type="SMR" id="D7UNT2"/>
<dbReference type="BRENDA" id="1.1.1.108">
    <property type="organism ID" value="5351"/>
</dbReference>
<dbReference type="SABIO-RK" id="D7UNT2"/>
<dbReference type="UniPathway" id="UPA00117"/>
<dbReference type="GO" id="GO:0005737">
    <property type="term" value="C:cytoplasm"/>
    <property type="evidence" value="ECO:0000314"/>
    <property type="project" value="UniProtKB"/>
</dbReference>
<dbReference type="GO" id="GO:0047728">
    <property type="term" value="F:carnitine 3-dehydrogenase activity"/>
    <property type="evidence" value="ECO:0000314"/>
    <property type="project" value="UniProtKB"/>
</dbReference>
<dbReference type="GO" id="GO:0016787">
    <property type="term" value="F:hydrolase activity"/>
    <property type="evidence" value="ECO:0007669"/>
    <property type="project" value="UniProtKB-KW"/>
</dbReference>
<dbReference type="GO" id="GO:0051287">
    <property type="term" value="F:NAD binding"/>
    <property type="evidence" value="ECO:0000314"/>
    <property type="project" value="UniProtKB"/>
</dbReference>
<dbReference type="GO" id="GO:0070403">
    <property type="term" value="F:NAD+ binding"/>
    <property type="evidence" value="ECO:0007669"/>
    <property type="project" value="InterPro"/>
</dbReference>
<dbReference type="GO" id="GO:0042413">
    <property type="term" value="P:carnitine catabolic process"/>
    <property type="evidence" value="ECO:0000314"/>
    <property type="project" value="UniProtKB"/>
</dbReference>
<dbReference type="GO" id="GO:0006631">
    <property type="term" value="P:fatty acid metabolic process"/>
    <property type="evidence" value="ECO:0007669"/>
    <property type="project" value="InterPro"/>
</dbReference>
<dbReference type="CDD" id="cd00586">
    <property type="entry name" value="4HBT"/>
    <property type="match status" value="1"/>
</dbReference>
<dbReference type="FunFam" id="1.10.1040.10:FF:000027">
    <property type="entry name" value="L-carnitine dehydrogenase"/>
    <property type="match status" value="1"/>
</dbReference>
<dbReference type="Gene3D" id="3.10.129.10">
    <property type="entry name" value="Hotdog Thioesterase"/>
    <property type="match status" value="1"/>
</dbReference>
<dbReference type="Gene3D" id="1.10.1040.10">
    <property type="entry name" value="N-(1-d-carboxylethyl)-l-norvaline Dehydrogenase, domain 2"/>
    <property type="match status" value="1"/>
</dbReference>
<dbReference type="Gene3D" id="3.40.50.720">
    <property type="entry name" value="NAD(P)-binding Rossmann-like Domain"/>
    <property type="match status" value="1"/>
</dbReference>
<dbReference type="HAMAP" id="MF_02129">
    <property type="entry name" value="L_carnitine_dehydrog"/>
    <property type="match status" value="1"/>
</dbReference>
<dbReference type="InterPro" id="IPR006176">
    <property type="entry name" value="3-OHacyl-CoA_DH_NAD-bd"/>
</dbReference>
<dbReference type="InterPro" id="IPR006108">
    <property type="entry name" value="3HC_DH_C"/>
</dbReference>
<dbReference type="InterPro" id="IPR008927">
    <property type="entry name" value="6-PGluconate_DH-like_C_sf"/>
</dbReference>
<dbReference type="InterPro" id="IPR013328">
    <property type="entry name" value="6PGD_dom2"/>
</dbReference>
<dbReference type="InterPro" id="IPR029069">
    <property type="entry name" value="HotDog_dom_sf"/>
</dbReference>
<dbReference type="InterPro" id="IPR026578">
    <property type="entry name" value="L-carnitine_dehydrogenase"/>
</dbReference>
<dbReference type="InterPro" id="IPR036291">
    <property type="entry name" value="NAD(P)-bd_dom_sf"/>
</dbReference>
<dbReference type="NCBIfam" id="NF005716">
    <property type="entry name" value="PRK07531.1"/>
    <property type="match status" value="1"/>
</dbReference>
<dbReference type="PANTHER" id="PTHR48075">
    <property type="entry name" value="3-HYDROXYACYL-COA DEHYDROGENASE FAMILY PROTEIN"/>
    <property type="match status" value="1"/>
</dbReference>
<dbReference type="PANTHER" id="PTHR48075:SF5">
    <property type="entry name" value="3-HYDROXYBUTYRYL-COA DEHYDROGENASE"/>
    <property type="match status" value="1"/>
</dbReference>
<dbReference type="Pfam" id="PF00725">
    <property type="entry name" value="3HCDH"/>
    <property type="match status" value="1"/>
</dbReference>
<dbReference type="Pfam" id="PF02737">
    <property type="entry name" value="3HCDH_N"/>
    <property type="match status" value="1"/>
</dbReference>
<dbReference type="Pfam" id="PF13279">
    <property type="entry name" value="4HBT_2"/>
    <property type="match status" value="1"/>
</dbReference>
<dbReference type="SUPFAM" id="SSF48179">
    <property type="entry name" value="6-phosphogluconate dehydrogenase C-terminal domain-like"/>
    <property type="match status" value="1"/>
</dbReference>
<dbReference type="SUPFAM" id="SSF51735">
    <property type="entry name" value="NAD(P)-binding Rossmann-fold domains"/>
    <property type="match status" value="1"/>
</dbReference>
<dbReference type="SUPFAM" id="SSF54637">
    <property type="entry name" value="Thioesterase/thiol ester dehydrase-isomerase"/>
    <property type="match status" value="1"/>
</dbReference>
<accession>D7UNT2</accession>
<comment type="function">
    <text evidence="1 3 6">Catalyzes the NAD(+)-dependent oxidation of L-carnitine to 3-dehydrocarnitine (PubMed:20530902). Probably also catalyzes the cleavage of betainyl-CoA (N,N,N-trimethylglycyl-CoA) into glycine betaine and coenzyme A (By similarity). Despite a high similarity to 3-hydroxyacyl-CoA dehydrogenases, cannot dehydrogenate 3-hydroxybutylate and 3-hydroxybutyl-CoA (PubMed:20530902). Is probably involved in a L-carnitine degradation pathway that allows Rhizobium sp. YS-240 to grow on L-carnitine as the sole source of carbon and nitrogen (Probable).</text>
</comment>
<comment type="catalytic activity">
    <reaction evidence="3">
        <text>carnitine + NAD(+) = 3-dehydrocarnitine + NADH + H(+)</text>
        <dbReference type="Rhea" id="RHEA:19265"/>
        <dbReference type="ChEBI" id="CHEBI:15378"/>
        <dbReference type="ChEBI" id="CHEBI:17126"/>
        <dbReference type="ChEBI" id="CHEBI:57540"/>
        <dbReference type="ChEBI" id="CHEBI:57885"/>
        <dbReference type="ChEBI" id="CHEBI:57945"/>
        <dbReference type="EC" id="1.1.1.108"/>
    </reaction>
    <physiologicalReaction direction="left-to-right" evidence="6">
        <dbReference type="Rhea" id="RHEA:19266"/>
    </physiologicalReaction>
</comment>
<comment type="catalytic activity">
    <reaction evidence="1">
        <text>N,N,N-trimethylglycyl-CoA + H2O = glycine betaine + CoA + H(+)</text>
        <dbReference type="Rhea" id="RHEA:45716"/>
        <dbReference type="ChEBI" id="CHEBI:15377"/>
        <dbReference type="ChEBI" id="CHEBI:15378"/>
        <dbReference type="ChEBI" id="CHEBI:17750"/>
        <dbReference type="ChEBI" id="CHEBI:57287"/>
        <dbReference type="ChEBI" id="CHEBI:85405"/>
        <dbReference type="EC" id="3.1.2.33"/>
    </reaction>
    <physiologicalReaction direction="left-to-right" evidence="1">
        <dbReference type="Rhea" id="RHEA:45717"/>
    </physiologicalReaction>
</comment>
<comment type="biophysicochemical properties">
    <kinetics>
        <KM evidence="3">1.1 mM for L-carnithine</KM>
        <KM evidence="3">0.087 mM for NAD(+)</KM>
        <KM evidence="3">1.2 mM for 3-dehydrocarnitine</KM>
        <Vmax evidence="3">18.9 umol/min/mg enzyme</Vmax>
    </kinetics>
</comment>
<comment type="pathway">
    <text evidence="5">Amine and polyamine metabolism; carnitine metabolism.</text>
</comment>
<comment type="subunit">
    <text evidence="1">Homodimer.</text>
</comment>
<comment type="subcellular location">
    <subcellularLocation>
        <location evidence="3">Cytoplasm</location>
    </subcellularLocation>
</comment>
<comment type="similarity">
    <text evidence="5">In the N-terminal section; belongs to the 3-hydroxyacyl-CoA dehydrogenase family. L-carnitine dehydrogenase subfamily.</text>
</comment>
<comment type="similarity">
    <text evidence="5">In the C-terminal section; belongs to the betainyl-CoA thioesterase family.</text>
</comment>
<gene>
    <name evidence="4" type="primary">Rs-cdh</name>
    <name evidence="7" type="synonym">lcdH</name>
</gene>
<reference key="1">
    <citation type="journal article" date="2010" name="Biosci. Biotechnol. Biochem.">
        <title>Biochemical characterization of L-carnitine dehydrogenases from Rhizobium sp. and Xanthomonas translucens.</title>
        <authorList>
            <person name="Arima J."/>
            <person name="Uesumi A."/>
            <person name="Mitsuzumi H."/>
            <person name="Mori N."/>
        </authorList>
    </citation>
    <scope>NUCLEOTIDE SEQUENCE [GENOMIC DNA]</scope>
    <scope>PROTEIN SEQUENCE OF 1-10</scope>
    <scope>FUNCTION</scope>
    <scope>CATALYTIC ACTIVITY</scope>
    <scope>KINETIC PARAMETERS</scope>
    <scope>SUBSTRATE SPECIFICITY</scope>
    <scope>SUBCELLULAR LOCATION</scope>
    <source>
        <strain>YS-240</strain>
    </source>
</reference>